<feature type="chain" id="PRO_0000326966" description="Protoheme IX farnesyltransferase">
    <location>
        <begin position="1"/>
        <end position="299"/>
    </location>
</feature>
<feature type="transmembrane region" description="Helical" evidence="1">
    <location>
        <begin position="27"/>
        <end position="47"/>
    </location>
</feature>
<feature type="transmembrane region" description="Helical" evidence="1">
    <location>
        <begin position="53"/>
        <end position="73"/>
    </location>
</feature>
<feature type="transmembrane region" description="Helical" evidence="1">
    <location>
        <begin position="97"/>
        <end position="117"/>
    </location>
</feature>
<feature type="transmembrane region" description="Helical" evidence="1">
    <location>
        <begin position="121"/>
        <end position="141"/>
    </location>
</feature>
<feature type="transmembrane region" description="Helical" evidence="1">
    <location>
        <begin position="149"/>
        <end position="169"/>
    </location>
</feature>
<feature type="transmembrane region" description="Helical" evidence="1">
    <location>
        <begin position="175"/>
        <end position="195"/>
    </location>
</feature>
<feature type="transmembrane region" description="Helical" evidence="1">
    <location>
        <begin position="222"/>
        <end position="242"/>
    </location>
</feature>
<feature type="transmembrane region" description="Helical" evidence="1">
    <location>
        <begin position="244"/>
        <end position="264"/>
    </location>
</feature>
<feature type="transmembrane region" description="Helical" evidence="1">
    <location>
        <begin position="273"/>
        <end position="293"/>
    </location>
</feature>
<comment type="function">
    <text evidence="1">Converts heme B (protoheme IX) to heme O by substitution of the vinyl group on carbon 2 of heme B porphyrin ring with a hydroxyethyl farnesyl side group.</text>
</comment>
<comment type="catalytic activity">
    <reaction evidence="1">
        <text>heme b + (2E,6E)-farnesyl diphosphate + H2O = Fe(II)-heme o + diphosphate</text>
        <dbReference type="Rhea" id="RHEA:28070"/>
        <dbReference type="ChEBI" id="CHEBI:15377"/>
        <dbReference type="ChEBI" id="CHEBI:33019"/>
        <dbReference type="ChEBI" id="CHEBI:60344"/>
        <dbReference type="ChEBI" id="CHEBI:60530"/>
        <dbReference type="ChEBI" id="CHEBI:175763"/>
        <dbReference type="EC" id="2.5.1.141"/>
    </reaction>
</comment>
<comment type="pathway">
    <text evidence="1">Porphyrin-containing compound metabolism; heme O biosynthesis; heme O from protoheme: step 1/1.</text>
</comment>
<comment type="subcellular location">
    <subcellularLocation>
        <location evidence="1">Cell inner membrane</location>
        <topology evidence="1">Multi-pass membrane protein</topology>
    </subcellularLocation>
</comment>
<comment type="miscellaneous">
    <text evidence="1">Carbon 2 of the heme B porphyrin ring is defined according to the Fischer nomenclature.</text>
</comment>
<comment type="similarity">
    <text evidence="1">Belongs to the UbiA prenyltransferase family. Protoheme IX farnesyltransferase subfamily.</text>
</comment>
<keyword id="KW-0997">Cell inner membrane</keyword>
<keyword id="KW-1003">Cell membrane</keyword>
<keyword id="KW-0350">Heme biosynthesis</keyword>
<keyword id="KW-0472">Membrane</keyword>
<keyword id="KW-0808">Transferase</keyword>
<keyword id="KW-0812">Transmembrane</keyword>
<keyword id="KW-1133">Transmembrane helix</keyword>
<dbReference type="EC" id="2.5.1.141" evidence="1"/>
<dbReference type="EMBL" id="AE016796">
    <property type="protein sequence ID" value="AAO07507.1"/>
    <property type="molecule type" value="Genomic_DNA"/>
</dbReference>
<dbReference type="RefSeq" id="WP_011081504.1">
    <property type="nucleotide sequence ID" value="NC_004460.2"/>
</dbReference>
<dbReference type="SMR" id="Q8D6H2"/>
<dbReference type="KEGG" id="vvu:VV2_0560"/>
<dbReference type="HOGENOM" id="CLU_029631_0_2_6"/>
<dbReference type="UniPathway" id="UPA00834">
    <property type="reaction ID" value="UER00712"/>
</dbReference>
<dbReference type="Proteomes" id="UP000002275">
    <property type="component" value="Chromosome 2"/>
</dbReference>
<dbReference type="GO" id="GO:0005886">
    <property type="term" value="C:plasma membrane"/>
    <property type="evidence" value="ECO:0007669"/>
    <property type="project" value="UniProtKB-SubCell"/>
</dbReference>
<dbReference type="GO" id="GO:0008495">
    <property type="term" value="F:protoheme IX farnesyltransferase activity"/>
    <property type="evidence" value="ECO:0007669"/>
    <property type="project" value="UniProtKB-UniRule"/>
</dbReference>
<dbReference type="GO" id="GO:0048034">
    <property type="term" value="P:heme O biosynthetic process"/>
    <property type="evidence" value="ECO:0007669"/>
    <property type="project" value="UniProtKB-UniRule"/>
</dbReference>
<dbReference type="CDD" id="cd13957">
    <property type="entry name" value="PT_UbiA_Cox10"/>
    <property type="match status" value="1"/>
</dbReference>
<dbReference type="FunFam" id="1.10.357.140:FF:000001">
    <property type="entry name" value="Protoheme IX farnesyltransferase"/>
    <property type="match status" value="1"/>
</dbReference>
<dbReference type="Gene3D" id="1.10.357.140">
    <property type="entry name" value="UbiA prenyltransferase"/>
    <property type="match status" value="1"/>
</dbReference>
<dbReference type="HAMAP" id="MF_00154">
    <property type="entry name" value="CyoE_CtaB"/>
    <property type="match status" value="1"/>
</dbReference>
<dbReference type="InterPro" id="IPR006369">
    <property type="entry name" value="Protohaem_IX_farnesylTrfase"/>
</dbReference>
<dbReference type="InterPro" id="IPR000537">
    <property type="entry name" value="UbiA_prenyltransferase"/>
</dbReference>
<dbReference type="InterPro" id="IPR030470">
    <property type="entry name" value="UbiA_prenylTrfase_CS"/>
</dbReference>
<dbReference type="InterPro" id="IPR044878">
    <property type="entry name" value="UbiA_sf"/>
</dbReference>
<dbReference type="NCBIfam" id="TIGR01473">
    <property type="entry name" value="cyoE_ctaB"/>
    <property type="match status" value="1"/>
</dbReference>
<dbReference type="NCBIfam" id="NF003349">
    <property type="entry name" value="PRK04375.1-2"/>
    <property type="match status" value="1"/>
</dbReference>
<dbReference type="PANTHER" id="PTHR43448:SF7">
    <property type="entry name" value="4-HYDROXYBENZOATE SOLANESYLTRANSFERASE"/>
    <property type="match status" value="1"/>
</dbReference>
<dbReference type="PANTHER" id="PTHR43448">
    <property type="entry name" value="PROTOHEME IX FARNESYLTRANSFERASE, MITOCHONDRIAL"/>
    <property type="match status" value="1"/>
</dbReference>
<dbReference type="Pfam" id="PF01040">
    <property type="entry name" value="UbiA"/>
    <property type="match status" value="1"/>
</dbReference>
<dbReference type="PROSITE" id="PS00943">
    <property type="entry name" value="UBIA"/>
    <property type="match status" value="1"/>
</dbReference>
<evidence type="ECO:0000255" key="1">
    <source>
        <dbReference type="HAMAP-Rule" id="MF_00154"/>
    </source>
</evidence>
<gene>
    <name evidence="1" type="primary">cyoE</name>
    <name type="ordered locus">VV2_0560</name>
</gene>
<accession>Q8D6H2</accession>
<reference key="1">
    <citation type="submission" date="2002-12" db="EMBL/GenBank/DDBJ databases">
        <title>Complete genome sequence of Vibrio vulnificus CMCP6.</title>
        <authorList>
            <person name="Rhee J.H."/>
            <person name="Kim S.Y."/>
            <person name="Chung S.S."/>
            <person name="Kim J.J."/>
            <person name="Moon Y.H."/>
            <person name="Jeong H."/>
            <person name="Choy H.E."/>
        </authorList>
    </citation>
    <scope>NUCLEOTIDE SEQUENCE [LARGE SCALE GENOMIC DNA]</scope>
    <source>
        <strain>CMCP6</strain>
    </source>
</reference>
<protein>
    <recommendedName>
        <fullName evidence="1">Protoheme IX farnesyltransferase</fullName>
        <ecNumber evidence="1">2.5.1.141</ecNumber>
    </recommendedName>
    <alternativeName>
        <fullName evidence="1">Heme B farnesyltransferase</fullName>
    </alternativeName>
    <alternativeName>
        <fullName evidence="1">Heme O synthase</fullName>
    </alternativeName>
</protein>
<proteinExistence type="inferred from homology"/>
<name>CYOE_VIBVU</name>
<sequence length="299" mass="33546">MSKTLSVDKSQLRSPWSTYWTLTKPKVVALMLLTSVVGMSLAPHEHFTWHQALIALVGIALMAGSAAAFNHLIDRRIDAKMARTYRRPLPKGDVSPFNVLLFALLIGSLGFLSLMLWVNSLTAYLTFASLLGYAAVYTLYLKRATPQNIVIAGIAGAMPPLLGWTSITGELHPHAWVLVMIIFIWTPPHFWALAIHRKEDYAKVNIPMLPVTHGVEYTKTSILLYAILLALVCMLPVLVGMASYLYLFSALVLNVCFVRYAIKLKFRAEERTAIEMFRFSIYFLLLLFCALLLDQQLAL</sequence>
<organism>
    <name type="scientific">Vibrio vulnificus (strain CMCP6)</name>
    <dbReference type="NCBI Taxonomy" id="216895"/>
    <lineage>
        <taxon>Bacteria</taxon>
        <taxon>Pseudomonadati</taxon>
        <taxon>Pseudomonadota</taxon>
        <taxon>Gammaproteobacteria</taxon>
        <taxon>Vibrionales</taxon>
        <taxon>Vibrionaceae</taxon>
        <taxon>Vibrio</taxon>
    </lineage>
</organism>